<reference key="1">
    <citation type="journal article" date="1988" name="J. Mol. Biol.">
        <title>Sequence analysis of mitochondrial DNA from Podospora anserina. Pervasiveness of a class I intron in three separate genes.</title>
        <authorList>
            <person name="Cummings D.J."/>
            <person name="Domenico J.M."/>
        </authorList>
    </citation>
    <scope>NUCLEOTIDE SEQUENCE [GENOMIC DNA]</scope>
    <source>
        <strain>A</strain>
        <strain>s</strain>
    </source>
</reference>
<reference key="2">
    <citation type="journal article" date="1990" name="Curr. Genet.">
        <title>The complete DNA sequence of the mitochondrial genome of Podospora anserina.</title>
        <authorList>
            <person name="Cummings D.J."/>
            <person name="McNally K.L."/>
            <person name="Domenico J.M."/>
            <person name="Matsuura E.T."/>
        </authorList>
    </citation>
    <scope>NUCLEOTIDE SEQUENCE [LARGE SCALE GENOMIC DNA]</scope>
    <source>
        <strain>s</strain>
    </source>
</reference>
<accession>P15994</accession>
<name>ATP6_PODAN</name>
<dbReference type="EMBL" id="X55026">
    <property type="protein sequence ID" value="CAA38770.1"/>
    <property type="molecule type" value="Genomic_DNA"/>
</dbReference>
<dbReference type="EMBL" id="X15602">
    <property type="protein sequence ID" value="CAA33625.1"/>
    <property type="molecule type" value="Genomic_DNA"/>
</dbReference>
<dbReference type="PIR" id="S02157">
    <property type="entry name" value="S02157"/>
</dbReference>
<dbReference type="RefSeq" id="NP_074918.1">
    <property type="nucleotide sequence ID" value="NC_001329.3"/>
</dbReference>
<dbReference type="SMR" id="P15994"/>
<dbReference type="FunCoup" id="P15994">
    <property type="interactions" value="243"/>
</dbReference>
<dbReference type="STRING" id="515849.P15994"/>
<dbReference type="GeneID" id="802471"/>
<dbReference type="KEGG" id="pan:PoanfMp10"/>
<dbReference type="InParanoid" id="P15994"/>
<dbReference type="Proteomes" id="UP000001197">
    <property type="component" value="Mitochondrion"/>
</dbReference>
<dbReference type="GO" id="GO:0005743">
    <property type="term" value="C:mitochondrial inner membrane"/>
    <property type="evidence" value="ECO:0007669"/>
    <property type="project" value="UniProtKB-SubCell"/>
</dbReference>
<dbReference type="GO" id="GO:0045259">
    <property type="term" value="C:proton-transporting ATP synthase complex"/>
    <property type="evidence" value="ECO:0007669"/>
    <property type="project" value="UniProtKB-KW"/>
</dbReference>
<dbReference type="GO" id="GO:0046933">
    <property type="term" value="F:proton-transporting ATP synthase activity, rotational mechanism"/>
    <property type="evidence" value="ECO:0007669"/>
    <property type="project" value="TreeGrafter"/>
</dbReference>
<dbReference type="CDD" id="cd00310">
    <property type="entry name" value="ATP-synt_Fo_a_6"/>
    <property type="match status" value="1"/>
</dbReference>
<dbReference type="FunFam" id="1.20.120.220:FF:000003">
    <property type="entry name" value="ATP synthase subunit a"/>
    <property type="match status" value="1"/>
</dbReference>
<dbReference type="Gene3D" id="1.20.120.220">
    <property type="entry name" value="ATP synthase, F0 complex, subunit A"/>
    <property type="match status" value="1"/>
</dbReference>
<dbReference type="HAMAP" id="MF_01393">
    <property type="entry name" value="ATP_synth_a_bact"/>
    <property type="match status" value="1"/>
</dbReference>
<dbReference type="InterPro" id="IPR000568">
    <property type="entry name" value="ATP_synth_F0_asu"/>
</dbReference>
<dbReference type="InterPro" id="IPR023011">
    <property type="entry name" value="ATP_synth_F0_asu_AS"/>
</dbReference>
<dbReference type="InterPro" id="IPR045083">
    <property type="entry name" value="ATP_synth_F0_asu_bact/mt"/>
</dbReference>
<dbReference type="InterPro" id="IPR035908">
    <property type="entry name" value="F0_ATP_A_sf"/>
</dbReference>
<dbReference type="NCBIfam" id="TIGR01131">
    <property type="entry name" value="ATP_synt_6_or_A"/>
    <property type="match status" value="1"/>
</dbReference>
<dbReference type="NCBIfam" id="NF004482">
    <property type="entry name" value="PRK05815.2-4"/>
    <property type="match status" value="1"/>
</dbReference>
<dbReference type="PANTHER" id="PTHR11410">
    <property type="entry name" value="ATP SYNTHASE SUBUNIT A"/>
    <property type="match status" value="1"/>
</dbReference>
<dbReference type="PANTHER" id="PTHR11410:SF0">
    <property type="entry name" value="ATP SYNTHASE SUBUNIT A"/>
    <property type="match status" value="1"/>
</dbReference>
<dbReference type="Pfam" id="PF00119">
    <property type="entry name" value="ATP-synt_A"/>
    <property type="match status" value="1"/>
</dbReference>
<dbReference type="PRINTS" id="PR00123">
    <property type="entry name" value="ATPASEA"/>
</dbReference>
<dbReference type="SUPFAM" id="SSF81336">
    <property type="entry name" value="F1F0 ATP synthase subunit A"/>
    <property type="match status" value="1"/>
</dbReference>
<dbReference type="PROSITE" id="PS00449">
    <property type="entry name" value="ATPASE_A"/>
    <property type="match status" value="1"/>
</dbReference>
<geneLocation type="mitochondrion"/>
<keyword id="KW-0066">ATP synthesis</keyword>
<keyword id="KW-0138">CF(0)</keyword>
<keyword id="KW-0375">Hydrogen ion transport</keyword>
<keyword id="KW-0406">Ion transport</keyword>
<keyword id="KW-0472">Membrane</keyword>
<keyword id="KW-0496">Mitochondrion</keyword>
<keyword id="KW-0999">Mitochondrion inner membrane</keyword>
<keyword id="KW-1185">Reference proteome</keyword>
<keyword id="KW-0812">Transmembrane</keyword>
<keyword id="KW-1133">Transmembrane helix</keyword>
<keyword id="KW-0813">Transport</keyword>
<sequence length="264" mass="29318">MNTLFNTVNFWRYNSSPLTQFEIKDLISIDTPILGNLHISITNIGFYLTMGAFFLLIINLLSTNYNKLIGNSWSISQESLYATLHSIVVNQINPKNGQIYFPFIYALFIFILINNLIGMVPYSFASTSHFVLTFALSFTIVLGATILGFQKHGLEFFSLLVPAGCPLGLLPLLVLIEFISYLARNISLGLRLAANILSGHMLLHILAGFTYNIMTSGIIFFFLGLIPLAFIIAFSGLELGIAFIQAQVFVVLTSGYIKDALDLH</sequence>
<organism>
    <name type="scientific">Podospora anserina (strain S / ATCC MYA-4624 / DSM 980 / FGSC 10383)</name>
    <name type="common">Pleurage anserina</name>
    <dbReference type="NCBI Taxonomy" id="515849"/>
    <lineage>
        <taxon>Eukaryota</taxon>
        <taxon>Fungi</taxon>
        <taxon>Dikarya</taxon>
        <taxon>Ascomycota</taxon>
        <taxon>Pezizomycotina</taxon>
        <taxon>Sordariomycetes</taxon>
        <taxon>Sordariomycetidae</taxon>
        <taxon>Sordariales</taxon>
        <taxon>Podosporaceae</taxon>
        <taxon>Podospora</taxon>
        <taxon>Podospora anserina</taxon>
    </lineage>
</organism>
<protein>
    <recommendedName>
        <fullName>ATP synthase subunit a</fullName>
    </recommendedName>
    <alternativeName>
        <fullName>F-ATPase protein 6</fullName>
    </alternativeName>
</protein>
<evidence type="ECO:0000255" key="1"/>
<evidence type="ECO:0000305" key="2"/>
<gene>
    <name type="primary">ATP6</name>
</gene>
<comment type="function">
    <text>Mitochondrial membrane ATP synthase (F(1)F(0) ATP synthase or Complex V) produces ATP from ADP in the presence of a proton gradient across the membrane which is generated by electron transport complexes of the respiratory chain. F-type ATPases consist of two structural domains, F(1) - containing the extramembraneous catalytic core and F(0) - containing the membrane proton channel, linked together by a central stalk and a peripheral stalk. During catalysis, ATP synthesis in the catalytic domain of F(1) is coupled via a rotary mechanism of the central stalk subunits to proton translocation. Key component of the proton channel; it may play a direct role in the translocation of protons across the membrane.</text>
</comment>
<comment type="subunit">
    <text>F-type ATPases have 2 components, CF(1) - the catalytic core - and CF(0) - the membrane proton channel. CF(1) has five subunits: alpha(3), beta(3), gamma(1), delta(1), epsilon(1). CF(0) has three main subunits: a, b and c.</text>
</comment>
<comment type="subcellular location">
    <subcellularLocation>
        <location>Mitochondrion inner membrane</location>
        <topology>Multi-pass membrane protein</topology>
    </subcellularLocation>
</comment>
<comment type="similarity">
    <text evidence="2">Belongs to the ATPase A chain family.</text>
</comment>
<feature type="chain" id="PRO_0000082156" description="ATP synthase subunit a">
    <location>
        <begin position="1"/>
        <end position="264"/>
    </location>
</feature>
<feature type="transmembrane region" description="Helical" evidence="1">
    <location>
        <begin position="41"/>
        <end position="61"/>
    </location>
</feature>
<feature type="transmembrane region" description="Helical" evidence="1">
    <location>
        <begin position="99"/>
        <end position="119"/>
    </location>
</feature>
<feature type="transmembrane region" description="Helical" evidence="1">
    <location>
        <begin position="129"/>
        <end position="149"/>
    </location>
</feature>
<feature type="transmembrane region" description="Helical" evidence="1">
    <location>
        <begin position="156"/>
        <end position="176"/>
    </location>
</feature>
<feature type="transmembrane region" description="Helical" evidence="1">
    <location>
        <begin position="194"/>
        <end position="214"/>
    </location>
</feature>
<feature type="transmembrane region" description="Helical" evidence="1">
    <location>
        <begin position="217"/>
        <end position="237"/>
    </location>
</feature>
<feature type="transmembrane region" description="Helical" evidence="1">
    <location>
        <begin position="238"/>
        <end position="258"/>
    </location>
</feature>
<proteinExistence type="inferred from homology"/>